<gene>
    <name evidence="1" type="primary">proS</name>
    <name type="ordered locus">SbBS512_E0188</name>
</gene>
<dbReference type="EC" id="6.1.1.15" evidence="1"/>
<dbReference type="EMBL" id="CP001063">
    <property type="protein sequence ID" value="ACD07209.1"/>
    <property type="molecule type" value="Genomic_DNA"/>
</dbReference>
<dbReference type="RefSeq" id="WP_001260712.1">
    <property type="nucleotide sequence ID" value="NC_010658.1"/>
</dbReference>
<dbReference type="SMR" id="B2U338"/>
<dbReference type="STRING" id="344609.SbBS512_E0188"/>
<dbReference type="GeneID" id="93777229"/>
<dbReference type="KEGG" id="sbc:SbBS512_E0188"/>
<dbReference type="HOGENOM" id="CLU_016739_0_0_6"/>
<dbReference type="Proteomes" id="UP000001030">
    <property type="component" value="Chromosome"/>
</dbReference>
<dbReference type="GO" id="GO:0005829">
    <property type="term" value="C:cytosol"/>
    <property type="evidence" value="ECO:0007669"/>
    <property type="project" value="TreeGrafter"/>
</dbReference>
<dbReference type="GO" id="GO:0002161">
    <property type="term" value="F:aminoacyl-tRNA deacylase activity"/>
    <property type="evidence" value="ECO:0007669"/>
    <property type="project" value="InterPro"/>
</dbReference>
<dbReference type="GO" id="GO:0005524">
    <property type="term" value="F:ATP binding"/>
    <property type="evidence" value="ECO:0007669"/>
    <property type="project" value="UniProtKB-UniRule"/>
</dbReference>
<dbReference type="GO" id="GO:0004827">
    <property type="term" value="F:proline-tRNA ligase activity"/>
    <property type="evidence" value="ECO:0007669"/>
    <property type="project" value="UniProtKB-UniRule"/>
</dbReference>
<dbReference type="GO" id="GO:0006433">
    <property type="term" value="P:prolyl-tRNA aminoacylation"/>
    <property type="evidence" value="ECO:0007669"/>
    <property type="project" value="UniProtKB-UniRule"/>
</dbReference>
<dbReference type="CDD" id="cd04334">
    <property type="entry name" value="ProRS-INS"/>
    <property type="match status" value="1"/>
</dbReference>
<dbReference type="CDD" id="cd00861">
    <property type="entry name" value="ProRS_anticodon_short"/>
    <property type="match status" value="1"/>
</dbReference>
<dbReference type="CDD" id="cd00779">
    <property type="entry name" value="ProRS_core_prok"/>
    <property type="match status" value="1"/>
</dbReference>
<dbReference type="FunFam" id="3.30.930.10:FF:000012">
    <property type="entry name" value="Proline--tRNA ligase"/>
    <property type="match status" value="1"/>
</dbReference>
<dbReference type="FunFam" id="3.30.930.10:FF:000097">
    <property type="entry name" value="Proline--tRNA ligase"/>
    <property type="match status" value="1"/>
</dbReference>
<dbReference type="FunFam" id="3.40.50.800:FF:000006">
    <property type="entry name" value="Proline--tRNA ligase"/>
    <property type="match status" value="1"/>
</dbReference>
<dbReference type="FunFam" id="3.90.960.10:FF:000001">
    <property type="entry name" value="Proline--tRNA ligase"/>
    <property type="match status" value="1"/>
</dbReference>
<dbReference type="Gene3D" id="3.40.50.800">
    <property type="entry name" value="Anticodon-binding domain"/>
    <property type="match status" value="1"/>
</dbReference>
<dbReference type="Gene3D" id="3.30.930.10">
    <property type="entry name" value="Bira Bifunctional Protein, Domain 2"/>
    <property type="match status" value="2"/>
</dbReference>
<dbReference type="Gene3D" id="3.90.960.10">
    <property type="entry name" value="YbaK/aminoacyl-tRNA synthetase-associated domain"/>
    <property type="match status" value="1"/>
</dbReference>
<dbReference type="HAMAP" id="MF_01569">
    <property type="entry name" value="Pro_tRNA_synth_type1"/>
    <property type="match status" value="1"/>
</dbReference>
<dbReference type="InterPro" id="IPR002314">
    <property type="entry name" value="aa-tRNA-synt_IIb"/>
</dbReference>
<dbReference type="InterPro" id="IPR006195">
    <property type="entry name" value="aa-tRNA-synth_II"/>
</dbReference>
<dbReference type="InterPro" id="IPR045864">
    <property type="entry name" value="aa-tRNA-synth_II/BPL/LPL"/>
</dbReference>
<dbReference type="InterPro" id="IPR004154">
    <property type="entry name" value="Anticodon-bd"/>
</dbReference>
<dbReference type="InterPro" id="IPR036621">
    <property type="entry name" value="Anticodon-bd_dom_sf"/>
</dbReference>
<dbReference type="InterPro" id="IPR002316">
    <property type="entry name" value="Pro-tRNA-ligase_IIa"/>
</dbReference>
<dbReference type="InterPro" id="IPR004500">
    <property type="entry name" value="Pro-tRNA-synth_IIa_bac-type"/>
</dbReference>
<dbReference type="InterPro" id="IPR023717">
    <property type="entry name" value="Pro-tRNA-Synthase_IIa_type1"/>
</dbReference>
<dbReference type="InterPro" id="IPR050062">
    <property type="entry name" value="Pro-tRNA_synthetase"/>
</dbReference>
<dbReference type="InterPro" id="IPR044140">
    <property type="entry name" value="ProRS_anticodon_short"/>
</dbReference>
<dbReference type="InterPro" id="IPR033730">
    <property type="entry name" value="ProRS_core_prok"/>
</dbReference>
<dbReference type="InterPro" id="IPR036754">
    <property type="entry name" value="YbaK/aa-tRNA-synt-asso_dom_sf"/>
</dbReference>
<dbReference type="InterPro" id="IPR007214">
    <property type="entry name" value="YbaK/aa-tRNA-synth-assoc-dom"/>
</dbReference>
<dbReference type="NCBIfam" id="NF006625">
    <property type="entry name" value="PRK09194.1"/>
    <property type="match status" value="1"/>
</dbReference>
<dbReference type="NCBIfam" id="TIGR00409">
    <property type="entry name" value="proS_fam_II"/>
    <property type="match status" value="1"/>
</dbReference>
<dbReference type="PANTHER" id="PTHR42753">
    <property type="entry name" value="MITOCHONDRIAL RIBOSOME PROTEIN L39/PROLYL-TRNA LIGASE FAMILY MEMBER"/>
    <property type="match status" value="1"/>
</dbReference>
<dbReference type="PANTHER" id="PTHR42753:SF2">
    <property type="entry name" value="PROLINE--TRNA LIGASE"/>
    <property type="match status" value="1"/>
</dbReference>
<dbReference type="Pfam" id="PF03129">
    <property type="entry name" value="HGTP_anticodon"/>
    <property type="match status" value="1"/>
</dbReference>
<dbReference type="Pfam" id="PF00587">
    <property type="entry name" value="tRNA-synt_2b"/>
    <property type="match status" value="1"/>
</dbReference>
<dbReference type="Pfam" id="PF04073">
    <property type="entry name" value="tRNA_edit"/>
    <property type="match status" value="1"/>
</dbReference>
<dbReference type="PIRSF" id="PIRSF001535">
    <property type="entry name" value="ProRS_1"/>
    <property type="match status" value="1"/>
</dbReference>
<dbReference type="PRINTS" id="PR01046">
    <property type="entry name" value="TRNASYNTHPRO"/>
</dbReference>
<dbReference type="SUPFAM" id="SSF52954">
    <property type="entry name" value="Class II aaRS ABD-related"/>
    <property type="match status" value="1"/>
</dbReference>
<dbReference type="SUPFAM" id="SSF55681">
    <property type="entry name" value="Class II aaRS and biotin synthetases"/>
    <property type="match status" value="1"/>
</dbReference>
<dbReference type="SUPFAM" id="SSF55826">
    <property type="entry name" value="YbaK/ProRS associated domain"/>
    <property type="match status" value="1"/>
</dbReference>
<dbReference type="PROSITE" id="PS50862">
    <property type="entry name" value="AA_TRNA_LIGASE_II"/>
    <property type="match status" value="1"/>
</dbReference>
<comment type="function">
    <text evidence="1">Catalyzes the attachment of proline to tRNA(Pro) in a two-step reaction: proline is first activated by ATP to form Pro-AMP and then transferred to the acceptor end of tRNA(Pro). As ProRS can inadvertently accommodate and process non-cognate amino acids such as alanine and cysteine, to avoid such errors it has two additional distinct editing activities against alanine. One activity is designated as 'pretransfer' editing and involves the tRNA(Pro)-independent hydrolysis of activated Ala-AMP. The other activity is designated 'posttransfer' editing and involves deacylation of mischarged Ala-tRNA(Pro). The misacylated Cys-tRNA(Pro) is not edited by ProRS.</text>
</comment>
<comment type="catalytic activity">
    <reaction evidence="1">
        <text>tRNA(Pro) + L-proline + ATP = L-prolyl-tRNA(Pro) + AMP + diphosphate</text>
        <dbReference type="Rhea" id="RHEA:14305"/>
        <dbReference type="Rhea" id="RHEA-COMP:9700"/>
        <dbReference type="Rhea" id="RHEA-COMP:9702"/>
        <dbReference type="ChEBI" id="CHEBI:30616"/>
        <dbReference type="ChEBI" id="CHEBI:33019"/>
        <dbReference type="ChEBI" id="CHEBI:60039"/>
        <dbReference type="ChEBI" id="CHEBI:78442"/>
        <dbReference type="ChEBI" id="CHEBI:78532"/>
        <dbReference type="ChEBI" id="CHEBI:456215"/>
        <dbReference type="EC" id="6.1.1.15"/>
    </reaction>
</comment>
<comment type="subunit">
    <text evidence="1">Homodimer.</text>
</comment>
<comment type="subcellular location">
    <subcellularLocation>
        <location evidence="1">Cytoplasm</location>
    </subcellularLocation>
</comment>
<comment type="domain">
    <text evidence="1">Consists of three domains: the N-terminal catalytic domain, the editing domain and the C-terminal anticodon-binding domain.</text>
</comment>
<comment type="similarity">
    <text evidence="1">Belongs to the class-II aminoacyl-tRNA synthetase family. ProS type 1 subfamily.</text>
</comment>
<keyword id="KW-0030">Aminoacyl-tRNA synthetase</keyword>
<keyword id="KW-0067">ATP-binding</keyword>
<keyword id="KW-0963">Cytoplasm</keyword>
<keyword id="KW-0436">Ligase</keyword>
<keyword id="KW-0547">Nucleotide-binding</keyword>
<keyword id="KW-0648">Protein biosynthesis</keyword>
<keyword id="KW-1185">Reference proteome</keyword>
<name>SYP_SHIB3</name>
<protein>
    <recommendedName>
        <fullName evidence="1">Proline--tRNA ligase</fullName>
        <ecNumber evidence="1">6.1.1.15</ecNumber>
    </recommendedName>
    <alternativeName>
        <fullName evidence="1">Prolyl-tRNA synthetase</fullName>
        <shortName evidence="1">ProRS</shortName>
    </alternativeName>
</protein>
<proteinExistence type="inferred from homology"/>
<reference key="1">
    <citation type="submission" date="2008-05" db="EMBL/GenBank/DDBJ databases">
        <title>Complete sequence of Shigella boydii serotype 18 strain BS512.</title>
        <authorList>
            <person name="Rasko D.A."/>
            <person name="Rosovitz M."/>
            <person name="Maurelli A.T."/>
            <person name="Myers G."/>
            <person name="Seshadri R."/>
            <person name="Cer R."/>
            <person name="Jiang L."/>
            <person name="Ravel J."/>
            <person name="Sebastian Y."/>
        </authorList>
    </citation>
    <scope>NUCLEOTIDE SEQUENCE [LARGE SCALE GENOMIC DNA]</scope>
    <source>
        <strain>CDC 3083-94 / BS512</strain>
    </source>
</reference>
<accession>B2U338</accession>
<feature type="chain" id="PRO_1000199423" description="Proline--tRNA ligase">
    <location>
        <begin position="1"/>
        <end position="572"/>
    </location>
</feature>
<organism>
    <name type="scientific">Shigella boydii serotype 18 (strain CDC 3083-94 / BS512)</name>
    <dbReference type="NCBI Taxonomy" id="344609"/>
    <lineage>
        <taxon>Bacteria</taxon>
        <taxon>Pseudomonadati</taxon>
        <taxon>Pseudomonadota</taxon>
        <taxon>Gammaproteobacteria</taxon>
        <taxon>Enterobacterales</taxon>
        <taxon>Enterobacteriaceae</taxon>
        <taxon>Shigella</taxon>
    </lineage>
</organism>
<evidence type="ECO:0000255" key="1">
    <source>
        <dbReference type="HAMAP-Rule" id="MF_01569"/>
    </source>
</evidence>
<sequence length="572" mass="63623">MRTSQYLLSTLKETPADAEVISHQLMLRAGMIRKLASGLYTWLPTGVRVLKKVENIVREEMNNAGAIEVSMPVVQPADLWQESGRWEQYGPELLRFVDRGERPFVLGPTHEEVITDLIRNELSSYKQLPLNFYQIQTKFRDEVRPRFGVMRSREFLMKDAYSFHTSQESLQETYDAMYAAYSKIFSRMGLDFRAVQADTGSIGGSASHEFQVLAQSGEDDVVFSDTSDYAANIELAEAIAPKEPRAAATQEMTLVDTPNAKTIAELVEQFNLPIEKTVKTLLVKAVEGSSFPLVALLVRGDHELNEVKAEKLPQVASPLTFATEEEIRAVVKAGPGSLGPVNMPIPVVIDRTVAAMSDFAAGANIDGKHYFGINWDRDVATPEVADIRNVVAGDPSPDGQGTLLIKRGIEVGHIFQLGTKYSEALKASVQGEDGRNQILTMGCYGIGVTRVVAAAIEQNYDERGIVWPDAIAPFQVAILPMNMHKSFRVQELAEKLYSELRAQGIEVLLDDRKERPGVMFADMELIGIPHTIVLGDRNLDNDDIEYKYRRNGEKQLIKTGDIVEYLVKQIKG</sequence>